<evidence type="ECO:0000250" key="1">
    <source>
        <dbReference type="UniProtKB" id="O15530"/>
    </source>
</evidence>
<evidence type="ECO:0000255" key="2">
    <source>
        <dbReference type="PROSITE-ProRule" id="PRU00159"/>
    </source>
</evidence>
<evidence type="ECO:0000255" key="3">
    <source>
        <dbReference type="PROSITE-ProRule" id="PRU10027"/>
    </source>
</evidence>
<evidence type="ECO:0000256" key="4">
    <source>
        <dbReference type="SAM" id="MobiDB-lite"/>
    </source>
</evidence>
<evidence type="ECO:0000305" key="5"/>
<dbReference type="EC" id="2.7.11.1"/>
<dbReference type="EMBL" id="AAFI02000041">
    <property type="protein sequence ID" value="EAL66717.1"/>
    <property type="molecule type" value="Genomic_DNA"/>
</dbReference>
<dbReference type="RefSeq" id="XP_640699.1">
    <property type="nucleotide sequence ID" value="XM_635607.1"/>
</dbReference>
<dbReference type="SMR" id="Q54TW2"/>
<dbReference type="FunCoup" id="Q54TW2">
    <property type="interactions" value="12"/>
</dbReference>
<dbReference type="STRING" id="44689.Q54TW2"/>
<dbReference type="GlyGen" id="Q54TW2">
    <property type="glycosylation" value="1 site"/>
</dbReference>
<dbReference type="PaxDb" id="44689-DDB0216243"/>
<dbReference type="EnsemblProtists" id="EAL66717">
    <property type="protein sequence ID" value="EAL66717"/>
    <property type="gene ID" value="DDB_G0281471"/>
</dbReference>
<dbReference type="GeneID" id="8623085"/>
<dbReference type="KEGG" id="ddi:DDB_G0281471"/>
<dbReference type="dictyBase" id="DDB_G0281471">
    <property type="gene designation" value="pdkA"/>
</dbReference>
<dbReference type="VEuPathDB" id="AmoebaDB:DDB_G0281471"/>
<dbReference type="eggNOG" id="KOG0592">
    <property type="taxonomic scope" value="Eukaryota"/>
</dbReference>
<dbReference type="eggNOG" id="KOG0605">
    <property type="taxonomic scope" value="Eukaryota"/>
</dbReference>
<dbReference type="HOGENOM" id="CLU_000288_63_9_1"/>
<dbReference type="InParanoid" id="Q54TW2"/>
<dbReference type="OMA" id="QYRVPDN"/>
<dbReference type="PhylomeDB" id="Q54TW2"/>
<dbReference type="Reactome" id="R-DDI-114604">
    <property type="pathway name" value="GPVI-mediated activation cascade"/>
</dbReference>
<dbReference type="Reactome" id="R-DDI-1257604">
    <property type="pathway name" value="PIP3 activates AKT signaling"/>
</dbReference>
<dbReference type="Reactome" id="R-DDI-165158">
    <property type="pathway name" value="Activation of AKT2"/>
</dbReference>
<dbReference type="Reactome" id="R-DDI-202424">
    <property type="pathway name" value="Downstream TCR signaling"/>
</dbReference>
<dbReference type="Reactome" id="R-DDI-2730905">
    <property type="pathway name" value="Role of LAT2/NTAL/LAB on calcium mobilization"/>
</dbReference>
<dbReference type="Reactome" id="R-DDI-389357">
    <property type="pathway name" value="CD28 dependent PI3K/Akt signaling"/>
</dbReference>
<dbReference type="Reactome" id="R-DDI-392451">
    <property type="pathway name" value="G beta:gamma signalling through PI3Kgamma"/>
</dbReference>
<dbReference type="Reactome" id="R-DDI-5218920">
    <property type="pathway name" value="VEGFR2 mediated vascular permeability"/>
</dbReference>
<dbReference type="Reactome" id="R-DDI-5218921">
    <property type="pathway name" value="VEGFR2 mediated cell proliferation"/>
</dbReference>
<dbReference type="Reactome" id="R-DDI-6804757">
    <property type="pathway name" value="Regulation of TP53 Degradation"/>
</dbReference>
<dbReference type="Reactome" id="R-DDI-9634635">
    <property type="pathway name" value="Estrogen-stimulated signaling through PRKCZ"/>
</dbReference>
<dbReference type="Reactome" id="R-DDI-9856530">
    <property type="pathway name" value="High laminar flow shear stress activates signaling by PIEZO1 and PECAM1:CDH5:KDR in endothelial cells"/>
</dbReference>
<dbReference type="PRO" id="PR:Q54TW2"/>
<dbReference type="Proteomes" id="UP000002195">
    <property type="component" value="Chromosome 3"/>
</dbReference>
<dbReference type="GO" id="GO:0031410">
    <property type="term" value="C:cytoplasmic vesicle"/>
    <property type="evidence" value="ECO:0000314"/>
    <property type="project" value="dictyBase"/>
</dbReference>
<dbReference type="GO" id="GO:0005886">
    <property type="term" value="C:plasma membrane"/>
    <property type="evidence" value="ECO:0000314"/>
    <property type="project" value="dictyBase"/>
</dbReference>
<dbReference type="GO" id="GO:0005524">
    <property type="term" value="F:ATP binding"/>
    <property type="evidence" value="ECO:0007669"/>
    <property type="project" value="UniProtKB-KW"/>
</dbReference>
<dbReference type="GO" id="GO:0030295">
    <property type="term" value="F:protein kinase activator activity"/>
    <property type="evidence" value="ECO:0000314"/>
    <property type="project" value="dictyBase"/>
</dbReference>
<dbReference type="GO" id="GO:0004672">
    <property type="term" value="F:protein kinase activity"/>
    <property type="evidence" value="ECO:0000315"/>
    <property type="project" value="dictyBase"/>
</dbReference>
<dbReference type="GO" id="GO:0106310">
    <property type="term" value="F:protein serine kinase activity"/>
    <property type="evidence" value="ECO:0007669"/>
    <property type="project" value="RHEA"/>
</dbReference>
<dbReference type="GO" id="GO:0004674">
    <property type="term" value="F:protein serine/threonine kinase activity"/>
    <property type="evidence" value="ECO:0000318"/>
    <property type="project" value="GO_Central"/>
</dbReference>
<dbReference type="GO" id="GO:0031152">
    <property type="term" value="P:aggregation involved in sorocarp development"/>
    <property type="evidence" value="ECO:0000315"/>
    <property type="project" value="dictyBase"/>
</dbReference>
<dbReference type="GO" id="GO:0098630">
    <property type="term" value="P:aggregation of unicellular organisms"/>
    <property type="evidence" value="ECO:0000315"/>
    <property type="project" value="CACAO"/>
</dbReference>
<dbReference type="GO" id="GO:0043327">
    <property type="term" value="P:chemotaxis to cAMP"/>
    <property type="evidence" value="ECO:0000316"/>
    <property type="project" value="dictyBase"/>
</dbReference>
<dbReference type="GO" id="GO:0035556">
    <property type="term" value="P:intracellular signal transduction"/>
    <property type="evidence" value="ECO:0000318"/>
    <property type="project" value="GO_Central"/>
</dbReference>
<dbReference type="GO" id="GO:1905303">
    <property type="term" value="P:positive regulation of macropinocytosis"/>
    <property type="evidence" value="ECO:0000315"/>
    <property type="project" value="dictyBase"/>
</dbReference>
<dbReference type="GO" id="GO:0051897">
    <property type="term" value="P:positive regulation of phosphatidylinositol 3-kinase/protein kinase B signal transduction"/>
    <property type="evidence" value="ECO:0000315"/>
    <property type="project" value="dictyBase"/>
</dbReference>
<dbReference type="GO" id="GO:0030587">
    <property type="term" value="P:sorocarp development"/>
    <property type="evidence" value="ECO:0000316"/>
    <property type="project" value="dictyBase"/>
</dbReference>
<dbReference type="CDD" id="cd01262">
    <property type="entry name" value="PH_PDK1"/>
    <property type="match status" value="1"/>
</dbReference>
<dbReference type="CDD" id="cd05581">
    <property type="entry name" value="STKc_PDK1"/>
    <property type="match status" value="1"/>
</dbReference>
<dbReference type="FunFam" id="3.30.200.20:FF:000837">
    <property type="entry name" value="AGC family protein kinase"/>
    <property type="match status" value="1"/>
</dbReference>
<dbReference type="FunFam" id="2.30.29.30:FF:000390">
    <property type="entry name" value="AGC/PDK1 protein kinase, variant 1"/>
    <property type="match status" value="1"/>
</dbReference>
<dbReference type="Gene3D" id="3.30.200.20">
    <property type="entry name" value="Phosphorylase Kinase, domain 1"/>
    <property type="match status" value="1"/>
</dbReference>
<dbReference type="Gene3D" id="2.30.29.30">
    <property type="entry name" value="Pleckstrin-homology domain (PH domain)/Phosphotyrosine-binding domain (PTB)"/>
    <property type="match status" value="1"/>
</dbReference>
<dbReference type="Gene3D" id="1.10.510.10">
    <property type="entry name" value="Transferase(Phosphotransferase) domain 1"/>
    <property type="match status" value="2"/>
</dbReference>
<dbReference type="InterPro" id="IPR011009">
    <property type="entry name" value="Kinase-like_dom_sf"/>
</dbReference>
<dbReference type="InterPro" id="IPR033931">
    <property type="entry name" value="PDK1-typ_PH"/>
</dbReference>
<dbReference type="InterPro" id="IPR039046">
    <property type="entry name" value="PDPK1"/>
</dbReference>
<dbReference type="InterPro" id="IPR011993">
    <property type="entry name" value="PH-like_dom_sf"/>
</dbReference>
<dbReference type="InterPro" id="IPR001849">
    <property type="entry name" value="PH_domain"/>
</dbReference>
<dbReference type="InterPro" id="IPR000719">
    <property type="entry name" value="Prot_kinase_dom"/>
</dbReference>
<dbReference type="InterPro" id="IPR017441">
    <property type="entry name" value="Protein_kinase_ATP_BS"/>
</dbReference>
<dbReference type="InterPro" id="IPR008271">
    <property type="entry name" value="Ser/Thr_kinase_AS"/>
</dbReference>
<dbReference type="InterPro" id="IPR050236">
    <property type="entry name" value="Ser_Thr_kinase_AGC"/>
</dbReference>
<dbReference type="PANTHER" id="PTHR24356:SF163">
    <property type="entry name" value="3-PHOSPHOINOSITIDE-DEPENDENT PROTEIN KINASE 1-RELATED"/>
    <property type="match status" value="1"/>
</dbReference>
<dbReference type="PANTHER" id="PTHR24356">
    <property type="entry name" value="SERINE/THREONINE-PROTEIN KINASE"/>
    <property type="match status" value="1"/>
</dbReference>
<dbReference type="Pfam" id="PF14593">
    <property type="entry name" value="PH_3"/>
    <property type="match status" value="1"/>
</dbReference>
<dbReference type="Pfam" id="PF00069">
    <property type="entry name" value="Pkinase"/>
    <property type="match status" value="2"/>
</dbReference>
<dbReference type="SMART" id="SM00233">
    <property type="entry name" value="PH"/>
    <property type="match status" value="1"/>
</dbReference>
<dbReference type="SMART" id="SM00220">
    <property type="entry name" value="S_TKc"/>
    <property type="match status" value="1"/>
</dbReference>
<dbReference type="SUPFAM" id="SSF50729">
    <property type="entry name" value="PH domain-like"/>
    <property type="match status" value="1"/>
</dbReference>
<dbReference type="SUPFAM" id="SSF56112">
    <property type="entry name" value="Protein kinase-like (PK-like)"/>
    <property type="match status" value="1"/>
</dbReference>
<dbReference type="PROSITE" id="PS00107">
    <property type="entry name" value="PROTEIN_KINASE_ATP"/>
    <property type="match status" value="1"/>
</dbReference>
<dbReference type="PROSITE" id="PS50011">
    <property type="entry name" value="PROTEIN_KINASE_DOM"/>
    <property type="match status" value="1"/>
</dbReference>
<dbReference type="PROSITE" id="PS00108">
    <property type="entry name" value="PROTEIN_KINASE_ST"/>
    <property type="match status" value="1"/>
</dbReference>
<keyword id="KW-0067">ATP-binding</keyword>
<keyword id="KW-0418">Kinase</keyword>
<keyword id="KW-0547">Nucleotide-binding</keyword>
<keyword id="KW-1185">Reference proteome</keyword>
<keyword id="KW-0723">Serine/threonine-protein kinase</keyword>
<keyword id="KW-0808">Transferase</keyword>
<gene>
    <name type="primary">pdkA</name>
    <name type="ORF">DDB_G0281471</name>
</gene>
<comment type="catalytic activity">
    <reaction>
        <text>L-seryl-[protein] + ATP = O-phospho-L-seryl-[protein] + ADP + H(+)</text>
        <dbReference type="Rhea" id="RHEA:17989"/>
        <dbReference type="Rhea" id="RHEA-COMP:9863"/>
        <dbReference type="Rhea" id="RHEA-COMP:11604"/>
        <dbReference type="ChEBI" id="CHEBI:15378"/>
        <dbReference type="ChEBI" id="CHEBI:29999"/>
        <dbReference type="ChEBI" id="CHEBI:30616"/>
        <dbReference type="ChEBI" id="CHEBI:83421"/>
        <dbReference type="ChEBI" id="CHEBI:456216"/>
        <dbReference type="EC" id="2.7.11.1"/>
    </reaction>
</comment>
<comment type="catalytic activity">
    <reaction>
        <text>L-threonyl-[protein] + ATP = O-phospho-L-threonyl-[protein] + ADP + H(+)</text>
        <dbReference type="Rhea" id="RHEA:46608"/>
        <dbReference type="Rhea" id="RHEA-COMP:11060"/>
        <dbReference type="Rhea" id="RHEA-COMP:11605"/>
        <dbReference type="ChEBI" id="CHEBI:15378"/>
        <dbReference type="ChEBI" id="CHEBI:30013"/>
        <dbReference type="ChEBI" id="CHEBI:30616"/>
        <dbReference type="ChEBI" id="CHEBI:61977"/>
        <dbReference type="ChEBI" id="CHEBI:456216"/>
        <dbReference type="EC" id="2.7.11.1"/>
    </reaction>
</comment>
<comment type="domain">
    <text evidence="1">The PIF-pocket is a small lobe in the catalytic domain required by the enzyme for the binding to the hydrophobic motif of its substrates. It is an allosteric regulatory site that can accommodate small compounds acting as allosteric inhibitors.</text>
</comment>
<comment type="similarity">
    <text evidence="5">Belongs to the protein kinase superfamily. AGC Ser/Thr protein kinase family. PDPK1 subfamily.</text>
</comment>
<name>PDPKA_DICDI</name>
<sequence length="686" mass="75562">MENIVITNTSGGGGGGVPSSSTDPPNNTTTTTATASAIDLNMSLSPFLSSPSLSSPSIQSAKKKTIEDFIIGKVLGEGSYGAVVLGTEKETQQQYAIKILEKKQIIKENKIKYVQIEKEIFCKSNHPNIVKLFFTFRSEQCLYYVLELCSQGDLLHQIKKVGSFDYRSCQYYVAEIISGLEHLHSLGIVHRDLKPENILMSSDLHVKITDFGTGKILPPPQSSQQQQQQQQQQQQLPTNSSGNLSSLLNNVNNLSVSTDLTQQQQNRTSSVDSASTTDSMISPNLQPTTTTTNNNNNNNNNNNNNNNNTAAGSNTNTNTNTNINTNINANINNIKTTEIPKLTRNNSFVGTAEYVSPELISNKETSTDSDLWALGCIIYQMASGRVPFRGKTEFLTFQKVSNRELVYPINMNPVIKDLVEKLLVIKPTDRLGSSSTPGGFDNLKAHPFFQDFNWSSLSNMSHPPPPIQPPQEKIIFDGDELFSPSLDCTTPRNNNVDENHQQNSCNNNNNNNNNINNINNNNNSSSNNISNSNSNSNSSNNLNISNGNLSTPRSSSSSSSQQPTQRSGSSGGSRDGGSSSNNISKWLNNGENVIYQGLVWKRKGFSIKKRQLILTDTPRLIYIDPKKMELKGEIPWSDSIKPKLKSNNNFVIKTPKRKYLLEDVAHNPQKWVDSIKSVILSSGSSN</sequence>
<accession>Q54TW2</accession>
<reference key="1">
    <citation type="journal article" date="2005" name="Nature">
        <title>The genome of the social amoeba Dictyostelium discoideum.</title>
        <authorList>
            <person name="Eichinger L."/>
            <person name="Pachebat J.A."/>
            <person name="Gloeckner G."/>
            <person name="Rajandream M.A."/>
            <person name="Sucgang R."/>
            <person name="Berriman M."/>
            <person name="Song J."/>
            <person name="Olsen R."/>
            <person name="Szafranski K."/>
            <person name="Xu Q."/>
            <person name="Tunggal B."/>
            <person name="Kummerfeld S."/>
            <person name="Madera M."/>
            <person name="Konfortov B.A."/>
            <person name="Rivero F."/>
            <person name="Bankier A.T."/>
            <person name="Lehmann R."/>
            <person name="Hamlin N."/>
            <person name="Davies R."/>
            <person name="Gaudet P."/>
            <person name="Fey P."/>
            <person name="Pilcher K."/>
            <person name="Chen G."/>
            <person name="Saunders D."/>
            <person name="Sodergren E.J."/>
            <person name="Davis P."/>
            <person name="Kerhornou A."/>
            <person name="Nie X."/>
            <person name="Hall N."/>
            <person name="Anjard C."/>
            <person name="Hemphill L."/>
            <person name="Bason N."/>
            <person name="Farbrother P."/>
            <person name="Desany B."/>
            <person name="Just E."/>
            <person name="Morio T."/>
            <person name="Rost R."/>
            <person name="Churcher C.M."/>
            <person name="Cooper J."/>
            <person name="Haydock S."/>
            <person name="van Driessche N."/>
            <person name="Cronin A."/>
            <person name="Goodhead I."/>
            <person name="Muzny D.M."/>
            <person name="Mourier T."/>
            <person name="Pain A."/>
            <person name="Lu M."/>
            <person name="Harper D."/>
            <person name="Lindsay R."/>
            <person name="Hauser H."/>
            <person name="James K.D."/>
            <person name="Quiles M."/>
            <person name="Madan Babu M."/>
            <person name="Saito T."/>
            <person name="Buchrieser C."/>
            <person name="Wardroper A."/>
            <person name="Felder M."/>
            <person name="Thangavelu M."/>
            <person name="Johnson D."/>
            <person name="Knights A."/>
            <person name="Loulseged H."/>
            <person name="Mungall K.L."/>
            <person name="Oliver K."/>
            <person name="Price C."/>
            <person name="Quail M.A."/>
            <person name="Urushihara H."/>
            <person name="Hernandez J."/>
            <person name="Rabbinowitsch E."/>
            <person name="Steffen D."/>
            <person name="Sanders M."/>
            <person name="Ma J."/>
            <person name="Kohara Y."/>
            <person name="Sharp S."/>
            <person name="Simmonds M.N."/>
            <person name="Spiegler S."/>
            <person name="Tivey A."/>
            <person name="Sugano S."/>
            <person name="White B."/>
            <person name="Walker D."/>
            <person name="Woodward J.R."/>
            <person name="Winckler T."/>
            <person name="Tanaka Y."/>
            <person name="Shaulsky G."/>
            <person name="Schleicher M."/>
            <person name="Weinstock G.M."/>
            <person name="Rosenthal A."/>
            <person name="Cox E.C."/>
            <person name="Chisholm R.L."/>
            <person name="Gibbs R.A."/>
            <person name="Loomis W.F."/>
            <person name="Platzer M."/>
            <person name="Kay R.R."/>
            <person name="Williams J.G."/>
            <person name="Dear P.H."/>
            <person name="Noegel A.A."/>
            <person name="Barrell B.G."/>
            <person name="Kuspa A."/>
        </authorList>
    </citation>
    <scope>NUCLEOTIDE SEQUENCE [LARGE SCALE GENOMIC DNA]</scope>
    <source>
        <strain>AX4</strain>
    </source>
</reference>
<protein>
    <recommendedName>
        <fullName>Probable serine/threonine-protein kinase pdkA</fullName>
        <ecNumber>2.7.11.1</ecNumber>
    </recommendedName>
    <alternativeName>
        <fullName>3-phosphoinositide-dependent protein kinase A</fullName>
    </alternativeName>
    <alternativeName>
        <fullName>Pdk-class protein kinase A</fullName>
    </alternativeName>
</protein>
<proteinExistence type="inferred from homology"/>
<organism>
    <name type="scientific">Dictyostelium discoideum</name>
    <name type="common">Social amoeba</name>
    <dbReference type="NCBI Taxonomy" id="44689"/>
    <lineage>
        <taxon>Eukaryota</taxon>
        <taxon>Amoebozoa</taxon>
        <taxon>Evosea</taxon>
        <taxon>Eumycetozoa</taxon>
        <taxon>Dictyostelia</taxon>
        <taxon>Dictyosteliales</taxon>
        <taxon>Dictyosteliaceae</taxon>
        <taxon>Dictyostelium</taxon>
    </lineage>
</organism>
<feature type="chain" id="PRO_0000358890" description="Probable serine/threonine-protein kinase pdkA">
    <location>
        <begin position="1"/>
        <end position="686"/>
    </location>
</feature>
<feature type="domain" description="Protein kinase" evidence="2">
    <location>
        <begin position="69"/>
        <end position="449"/>
    </location>
</feature>
<feature type="domain" description="PH">
    <location>
        <begin position="593"/>
        <end position="682"/>
    </location>
</feature>
<feature type="region of interest" description="Disordered" evidence="4">
    <location>
        <begin position="1"/>
        <end position="31"/>
    </location>
</feature>
<feature type="region of interest" description="PIF-pocket" evidence="1">
    <location>
        <begin position="100"/>
        <end position="144"/>
    </location>
</feature>
<feature type="region of interest" description="Disordered" evidence="4">
    <location>
        <begin position="211"/>
        <end position="321"/>
    </location>
</feature>
<feature type="region of interest" description="Disordered" evidence="4">
    <location>
        <begin position="481"/>
        <end position="584"/>
    </location>
</feature>
<feature type="compositionally biased region" description="Low complexity" evidence="4">
    <location>
        <begin position="18"/>
        <end position="31"/>
    </location>
</feature>
<feature type="compositionally biased region" description="Low complexity" evidence="4">
    <location>
        <begin position="222"/>
        <end position="257"/>
    </location>
</feature>
<feature type="compositionally biased region" description="Polar residues" evidence="4">
    <location>
        <begin position="258"/>
        <end position="267"/>
    </location>
</feature>
<feature type="compositionally biased region" description="Low complexity" evidence="4">
    <location>
        <begin position="268"/>
        <end position="279"/>
    </location>
</feature>
<feature type="compositionally biased region" description="Low complexity" evidence="4">
    <location>
        <begin position="288"/>
        <end position="321"/>
    </location>
</feature>
<feature type="compositionally biased region" description="Low complexity" evidence="4">
    <location>
        <begin position="503"/>
        <end position="568"/>
    </location>
</feature>
<feature type="active site" description="Proton acceptor" evidence="2 3">
    <location>
        <position position="192"/>
    </location>
</feature>
<feature type="binding site" evidence="1">
    <location>
        <begin position="79"/>
        <end position="81"/>
    </location>
    <ligand>
        <name>ATP</name>
        <dbReference type="ChEBI" id="CHEBI:30616"/>
    </ligand>
</feature>
<feature type="binding site" evidence="1">
    <location>
        <position position="98"/>
    </location>
    <ligand>
        <name>ATP</name>
        <dbReference type="ChEBI" id="CHEBI:30616"/>
    </ligand>
</feature>
<feature type="binding site" evidence="1">
    <location>
        <begin position="147"/>
        <end position="149"/>
    </location>
    <ligand>
        <name>ATP</name>
        <dbReference type="ChEBI" id="CHEBI:30616"/>
    </ligand>
</feature>
<feature type="binding site" evidence="1">
    <location>
        <position position="153"/>
    </location>
    <ligand>
        <name>ATP</name>
        <dbReference type="ChEBI" id="CHEBI:30616"/>
    </ligand>
</feature>
<feature type="binding site" evidence="1">
    <location>
        <position position="196"/>
    </location>
    <ligand>
        <name>ATP</name>
        <dbReference type="ChEBI" id="CHEBI:30616"/>
    </ligand>
</feature>
<feature type="binding site" evidence="1">
    <location>
        <position position="210"/>
    </location>
    <ligand>
        <name>ATP</name>
        <dbReference type="ChEBI" id="CHEBI:30616"/>
    </ligand>
</feature>